<comment type="function">
    <text evidence="2">Component of the ubiquinol-cytochrome c reductase complex (complex III or cytochrome b-c1 complex) that is part of the mitochondrial respiratory chain. The b-c1 complex mediates electron transfer from ubiquinol to cytochrome c. Contributes to the generation of a proton gradient across the mitochondrial membrane that is then used for ATP synthesis.</text>
</comment>
<comment type="cofactor">
    <cofactor evidence="2">
        <name>heme b</name>
        <dbReference type="ChEBI" id="CHEBI:60344"/>
    </cofactor>
    <text evidence="2">Binds 2 heme b groups non-covalently.</text>
</comment>
<comment type="subunit">
    <text evidence="2">The cytochrome bc1 complex contains 11 subunits: 3 respiratory subunits (MT-CYB, CYC1 and UQCRFS1), 2 core proteins (UQCRC1 and UQCRC2) and 6 low-molecular weight proteins (UQCRH/QCR6, UQCRB/QCR7, UQCRQ/QCR8, UQCR10/QCR9, UQCR11/QCR10 and a cleavage product of UQCRFS1). This cytochrome bc1 complex then forms a dimer.</text>
</comment>
<comment type="subcellular location">
    <subcellularLocation>
        <location evidence="2">Mitochondrion inner membrane</location>
        <topology evidence="2">Multi-pass membrane protein</topology>
    </subcellularLocation>
</comment>
<comment type="miscellaneous">
    <text evidence="1">Heme 1 (or BL or b562) is low-potential and absorbs at about 562 nm, and heme 2 (or BH or b566) is high-potential and absorbs at about 566 nm.</text>
</comment>
<comment type="similarity">
    <text evidence="3 4">Belongs to the cytochrome b family.</text>
</comment>
<comment type="caution">
    <text evidence="2">The full-length protein contains only eight transmembrane helices, not nine as predicted by bioinformatics tools.</text>
</comment>
<sequence>MTNTRKSHPLIKIINHSFIDLPTPSNISAWWNFGSLLGICLVVQILTGLFLAMHYTSDTTTAFSSVAHICRDVNYGWLIRYMHANGASMFFICLFLHVGRGMYYGSYTFFETWNIGVLLLFTVMATAFMGYVLPWGQMSFWGATVITNLLSAIPYAGTNLVEWIWGGFSVDKATLTRFFAFHFILPFIIAALAMVHLLFLHETGSNNPSGLISDSDKIPFHPYYSIKDILGLFILLLAFMTLVLFSPDLLGDPDNYTPANPLSTPPHIKPEWYFLFAYAILRSIPNKLGGVLALISSILILTMFPILHTSKQRSMMFRPLSQCLFWVLVADLFTLTWIGGQPVEHPFIIIGQLASILYFTIILLLLPLTALMENKLLKW</sequence>
<dbReference type="EMBL" id="AY452690">
    <property type="protein sequence ID" value="AAR19101.1"/>
    <property type="molecule type" value="Genomic_DNA"/>
</dbReference>
<dbReference type="SMR" id="Q6SQI7"/>
<dbReference type="GO" id="GO:0005743">
    <property type="term" value="C:mitochondrial inner membrane"/>
    <property type="evidence" value="ECO:0007669"/>
    <property type="project" value="UniProtKB-SubCell"/>
</dbReference>
<dbReference type="GO" id="GO:0045275">
    <property type="term" value="C:respiratory chain complex III"/>
    <property type="evidence" value="ECO:0007669"/>
    <property type="project" value="InterPro"/>
</dbReference>
<dbReference type="GO" id="GO:0046872">
    <property type="term" value="F:metal ion binding"/>
    <property type="evidence" value="ECO:0007669"/>
    <property type="project" value="UniProtKB-KW"/>
</dbReference>
<dbReference type="GO" id="GO:0008121">
    <property type="term" value="F:ubiquinol-cytochrome-c reductase activity"/>
    <property type="evidence" value="ECO:0007669"/>
    <property type="project" value="InterPro"/>
</dbReference>
<dbReference type="GO" id="GO:0006122">
    <property type="term" value="P:mitochondrial electron transport, ubiquinol to cytochrome c"/>
    <property type="evidence" value="ECO:0007669"/>
    <property type="project" value="TreeGrafter"/>
</dbReference>
<dbReference type="CDD" id="cd00290">
    <property type="entry name" value="cytochrome_b_C"/>
    <property type="match status" value="1"/>
</dbReference>
<dbReference type="CDD" id="cd00284">
    <property type="entry name" value="Cytochrome_b_N"/>
    <property type="match status" value="1"/>
</dbReference>
<dbReference type="FunFam" id="1.20.810.10:FF:000002">
    <property type="entry name" value="Cytochrome b"/>
    <property type="match status" value="1"/>
</dbReference>
<dbReference type="Gene3D" id="1.20.810.10">
    <property type="entry name" value="Cytochrome Bc1 Complex, Chain C"/>
    <property type="match status" value="1"/>
</dbReference>
<dbReference type="InterPro" id="IPR005798">
    <property type="entry name" value="Cyt_b/b6_C"/>
</dbReference>
<dbReference type="InterPro" id="IPR036150">
    <property type="entry name" value="Cyt_b/b6_C_sf"/>
</dbReference>
<dbReference type="InterPro" id="IPR005797">
    <property type="entry name" value="Cyt_b/b6_N"/>
</dbReference>
<dbReference type="InterPro" id="IPR027387">
    <property type="entry name" value="Cytb/b6-like_sf"/>
</dbReference>
<dbReference type="InterPro" id="IPR030689">
    <property type="entry name" value="Cytochrome_b"/>
</dbReference>
<dbReference type="InterPro" id="IPR048260">
    <property type="entry name" value="Cytochrome_b_C_euk/bac"/>
</dbReference>
<dbReference type="InterPro" id="IPR048259">
    <property type="entry name" value="Cytochrome_b_N_euk/bac"/>
</dbReference>
<dbReference type="InterPro" id="IPR016174">
    <property type="entry name" value="Di-haem_cyt_TM"/>
</dbReference>
<dbReference type="PANTHER" id="PTHR19271">
    <property type="entry name" value="CYTOCHROME B"/>
    <property type="match status" value="1"/>
</dbReference>
<dbReference type="PANTHER" id="PTHR19271:SF16">
    <property type="entry name" value="CYTOCHROME B"/>
    <property type="match status" value="1"/>
</dbReference>
<dbReference type="Pfam" id="PF00032">
    <property type="entry name" value="Cytochrom_B_C"/>
    <property type="match status" value="1"/>
</dbReference>
<dbReference type="Pfam" id="PF00033">
    <property type="entry name" value="Cytochrome_B"/>
    <property type="match status" value="1"/>
</dbReference>
<dbReference type="PIRSF" id="PIRSF038885">
    <property type="entry name" value="COB"/>
    <property type="match status" value="1"/>
</dbReference>
<dbReference type="SUPFAM" id="SSF81648">
    <property type="entry name" value="a domain/subunit of cytochrome bc1 complex (Ubiquinol-cytochrome c reductase)"/>
    <property type="match status" value="1"/>
</dbReference>
<dbReference type="SUPFAM" id="SSF81342">
    <property type="entry name" value="Transmembrane di-heme cytochromes"/>
    <property type="match status" value="1"/>
</dbReference>
<dbReference type="PROSITE" id="PS51003">
    <property type="entry name" value="CYTB_CTER"/>
    <property type="match status" value="1"/>
</dbReference>
<dbReference type="PROSITE" id="PS51002">
    <property type="entry name" value="CYTB_NTER"/>
    <property type="match status" value="1"/>
</dbReference>
<protein>
    <recommendedName>
        <fullName>Cytochrome b</fullName>
    </recommendedName>
    <alternativeName>
        <fullName>Complex III subunit 3</fullName>
    </alternativeName>
    <alternativeName>
        <fullName>Complex III subunit III</fullName>
    </alternativeName>
    <alternativeName>
        <fullName>Cytochrome b-c1 complex subunit 3</fullName>
    </alternativeName>
    <alternativeName>
        <fullName>Ubiquinol-cytochrome-c reductase complex cytochrome b subunit</fullName>
    </alternativeName>
</protein>
<proteinExistence type="inferred from homology"/>
<gene>
    <name type="primary">MT-CYB</name>
    <name type="synonym">COB</name>
    <name type="synonym">CYTB</name>
    <name type="synonym">MTCYB</name>
</gene>
<geneLocation type="mitochondrion"/>
<keyword id="KW-0249">Electron transport</keyword>
<keyword id="KW-0349">Heme</keyword>
<keyword id="KW-0408">Iron</keyword>
<keyword id="KW-0472">Membrane</keyword>
<keyword id="KW-0479">Metal-binding</keyword>
<keyword id="KW-0496">Mitochondrion</keyword>
<keyword id="KW-0999">Mitochondrion inner membrane</keyword>
<keyword id="KW-0679">Respiratory chain</keyword>
<keyword id="KW-0812">Transmembrane</keyword>
<keyword id="KW-1133">Transmembrane helix</keyword>
<keyword id="KW-0813">Transport</keyword>
<keyword id="KW-0830">Ubiquinone</keyword>
<organism>
    <name type="scientific">Xerus rutilus</name>
    <name type="common">Unstriped ground squirrel</name>
    <dbReference type="NCBI Taxonomy" id="226860"/>
    <lineage>
        <taxon>Eukaryota</taxon>
        <taxon>Metazoa</taxon>
        <taxon>Chordata</taxon>
        <taxon>Craniata</taxon>
        <taxon>Vertebrata</taxon>
        <taxon>Euteleostomi</taxon>
        <taxon>Mammalia</taxon>
        <taxon>Eutheria</taxon>
        <taxon>Euarchontoglires</taxon>
        <taxon>Glires</taxon>
        <taxon>Rodentia</taxon>
        <taxon>Sciuromorpha</taxon>
        <taxon>Sciuridae</taxon>
        <taxon>Xerinae</taxon>
        <taxon>Xerini</taxon>
        <taxon>Xerus</taxon>
    </lineage>
</organism>
<name>CYB_XERRU</name>
<reference key="1">
    <citation type="journal article" date="2004" name="Mol. Phylogenet. Evol.">
        <title>Sciurid phylogeny and the paraphyly of Holarctic ground squirrels (Spermophilus).</title>
        <authorList>
            <person name="Herron M.D."/>
            <person name="Castoe T.A."/>
            <person name="Parkinson C.L."/>
        </authorList>
    </citation>
    <scope>NUCLEOTIDE SEQUENCE [GENOMIC DNA]</scope>
</reference>
<evidence type="ECO:0000250" key="1"/>
<evidence type="ECO:0000250" key="2">
    <source>
        <dbReference type="UniProtKB" id="P00157"/>
    </source>
</evidence>
<evidence type="ECO:0000255" key="3">
    <source>
        <dbReference type="PROSITE-ProRule" id="PRU00967"/>
    </source>
</evidence>
<evidence type="ECO:0000255" key="4">
    <source>
        <dbReference type="PROSITE-ProRule" id="PRU00968"/>
    </source>
</evidence>
<accession>Q6SQI7</accession>
<feature type="chain" id="PRO_0000257959" description="Cytochrome b">
    <location>
        <begin position="1"/>
        <end position="379"/>
    </location>
</feature>
<feature type="transmembrane region" description="Helical" evidence="2">
    <location>
        <begin position="33"/>
        <end position="53"/>
    </location>
</feature>
<feature type="transmembrane region" description="Helical" evidence="2">
    <location>
        <begin position="77"/>
        <end position="98"/>
    </location>
</feature>
<feature type="transmembrane region" description="Helical" evidence="2">
    <location>
        <begin position="113"/>
        <end position="133"/>
    </location>
</feature>
<feature type="transmembrane region" description="Helical" evidence="2">
    <location>
        <begin position="178"/>
        <end position="198"/>
    </location>
</feature>
<feature type="transmembrane region" description="Helical" evidence="2">
    <location>
        <begin position="226"/>
        <end position="246"/>
    </location>
</feature>
<feature type="transmembrane region" description="Helical" evidence="2">
    <location>
        <begin position="288"/>
        <end position="308"/>
    </location>
</feature>
<feature type="transmembrane region" description="Helical" evidence="2">
    <location>
        <begin position="320"/>
        <end position="340"/>
    </location>
</feature>
<feature type="transmembrane region" description="Helical" evidence="2">
    <location>
        <begin position="347"/>
        <end position="367"/>
    </location>
</feature>
<feature type="binding site" description="axial binding residue" evidence="2">
    <location>
        <position position="83"/>
    </location>
    <ligand>
        <name>heme b</name>
        <dbReference type="ChEBI" id="CHEBI:60344"/>
        <label>b562</label>
    </ligand>
    <ligandPart>
        <name>Fe</name>
        <dbReference type="ChEBI" id="CHEBI:18248"/>
    </ligandPart>
</feature>
<feature type="binding site" description="axial binding residue" evidence="2">
    <location>
        <position position="97"/>
    </location>
    <ligand>
        <name>heme b</name>
        <dbReference type="ChEBI" id="CHEBI:60344"/>
        <label>b566</label>
    </ligand>
    <ligandPart>
        <name>Fe</name>
        <dbReference type="ChEBI" id="CHEBI:18248"/>
    </ligandPart>
</feature>
<feature type="binding site" description="axial binding residue" evidence="2">
    <location>
        <position position="182"/>
    </location>
    <ligand>
        <name>heme b</name>
        <dbReference type="ChEBI" id="CHEBI:60344"/>
        <label>b562</label>
    </ligand>
    <ligandPart>
        <name>Fe</name>
        <dbReference type="ChEBI" id="CHEBI:18248"/>
    </ligandPart>
</feature>
<feature type="binding site" description="axial binding residue" evidence="2">
    <location>
        <position position="196"/>
    </location>
    <ligand>
        <name>heme b</name>
        <dbReference type="ChEBI" id="CHEBI:60344"/>
        <label>b566</label>
    </ligand>
    <ligandPart>
        <name>Fe</name>
        <dbReference type="ChEBI" id="CHEBI:18248"/>
    </ligandPart>
</feature>
<feature type="binding site" evidence="2">
    <location>
        <position position="201"/>
    </location>
    <ligand>
        <name>a ubiquinone</name>
        <dbReference type="ChEBI" id="CHEBI:16389"/>
    </ligand>
</feature>